<proteinExistence type="inferred from homology"/>
<name>HTPX_YERPY</name>
<dbReference type="EC" id="3.4.24.-" evidence="1"/>
<dbReference type="EMBL" id="CP000950">
    <property type="protein sequence ID" value="ACA68075.1"/>
    <property type="molecule type" value="Genomic_DNA"/>
</dbReference>
<dbReference type="RefSeq" id="WP_002210847.1">
    <property type="nucleotide sequence ID" value="NZ_CP009792.1"/>
</dbReference>
<dbReference type="SMR" id="B1JIC9"/>
<dbReference type="MEROPS" id="M48.002"/>
<dbReference type="GeneID" id="57976872"/>
<dbReference type="KEGG" id="ypy:YPK_1784"/>
<dbReference type="PATRIC" id="fig|502800.11.peg.2450"/>
<dbReference type="GO" id="GO:0005886">
    <property type="term" value="C:plasma membrane"/>
    <property type="evidence" value="ECO:0007669"/>
    <property type="project" value="UniProtKB-SubCell"/>
</dbReference>
<dbReference type="GO" id="GO:0004222">
    <property type="term" value="F:metalloendopeptidase activity"/>
    <property type="evidence" value="ECO:0007669"/>
    <property type="project" value="UniProtKB-UniRule"/>
</dbReference>
<dbReference type="GO" id="GO:0008270">
    <property type="term" value="F:zinc ion binding"/>
    <property type="evidence" value="ECO:0007669"/>
    <property type="project" value="UniProtKB-UniRule"/>
</dbReference>
<dbReference type="GO" id="GO:0006508">
    <property type="term" value="P:proteolysis"/>
    <property type="evidence" value="ECO:0007669"/>
    <property type="project" value="UniProtKB-KW"/>
</dbReference>
<dbReference type="CDD" id="cd07335">
    <property type="entry name" value="M48B_HtpX_like"/>
    <property type="match status" value="1"/>
</dbReference>
<dbReference type="FunFam" id="3.30.2010.10:FF:000001">
    <property type="entry name" value="Protease HtpX"/>
    <property type="match status" value="1"/>
</dbReference>
<dbReference type="Gene3D" id="3.30.2010.10">
    <property type="entry name" value="Metalloproteases ('zincins'), catalytic domain"/>
    <property type="match status" value="1"/>
</dbReference>
<dbReference type="HAMAP" id="MF_00188">
    <property type="entry name" value="Pept_M48_protease_HtpX"/>
    <property type="match status" value="1"/>
</dbReference>
<dbReference type="InterPro" id="IPR050083">
    <property type="entry name" value="HtpX_protease"/>
</dbReference>
<dbReference type="InterPro" id="IPR022919">
    <property type="entry name" value="Pept_M48_protease_HtpX"/>
</dbReference>
<dbReference type="InterPro" id="IPR001915">
    <property type="entry name" value="Peptidase_M48"/>
</dbReference>
<dbReference type="NCBIfam" id="NF003965">
    <property type="entry name" value="PRK05457.1"/>
    <property type="match status" value="1"/>
</dbReference>
<dbReference type="PANTHER" id="PTHR43221">
    <property type="entry name" value="PROTEASE HTPX"/>
    <property type="match status" value="1"/>
</dbReference>
<dbReference type="PANTHER" id="PTHR43221:SF1">
    <property type="entry name" value="PROTEASE HTPX"/>
    <property type="match status" value="1"/>
</dbReference>
<dbReference type="Pfam" id="PF01435">
    <property type="entry name" value="Peptidase_M48"/>
    <property type="match status" value="1"/>
</dbReference>
<sequence>MMRIALFLLTNLAVMLVFGLVLSLTGIQSSSVQGLMIMAGLFGFGGAFVSLLMSKWMALRSVGGEVIERPRNETEYWLLETVRRQSQQVGIAMPQVAIYQAPDINAFATGARRDASLVAVSTGLLQNMSRDEAEAVIAHEISHVANGDMVTMTLIQGVVNTFVIFISRLIAQIAAGFLSGDRDGESNSPGNPMVYFAVSMVLELVFGILASIITMWFSRHREFHADAGSAKLVGREKMIAALQRLKTSYEPQEAGSMMAFCINGKSKTFSELFMSHPPLDKRIEALRSGQYLK</sequence>
<comment type="cofactor">
    <cofactor evidence="1">
        <name>Zn(2+)</name>
        <dbReference type="ChEBI" id="CHEBI:29105"/>
    </cofactor>
    <text evidence="1">Binds 1 zinc ion per subunit.</text>
</comment>
<comment type="subcellular location">
    <subcellularLocation>
        <location evidence="1">Cell inner membrane</location>
        <topology evidence="1">Multi-pass membrane protein</topology>
    </subcellularLocation>
</comment>
<comment type="similarity">
    <text evidence="1">Belongs to the peptidase M48B family.</text>
</comment>
<protein>
    <recommendedName>
        <fullName evidence="1">Protease HtpX</fullName>
        <ecNumber evidence="1">3.4.24.-</ecNumber>
    </recommendedName>
    <alternativeName>
        <fullName evidence="1">Heat shock protein HtpX</fullName>
    </alternativeName>
</protein>
<gene>
    <name evidence="1" type="primary">htpX</name>
    <name type="ordered locus">YPK_1784</name>
</gene>
<accession>B1JIC9</accession>
<evidence type="ECO:0000255" key="1">
    <source>
        <dbReference type="HAMAP-Rule" id="MF_00188"/>
    </source>
</evidence>
<keyword id="KW-0997">Cell inner membrane</keyword>
<keyword id="KW-1003">Cell membrane</keyword>
<keyword id="KW-0378">Hydrolase</keyword>
<keyword id="KW-0472">Membrane</keyword>
<keyword id="KW-0479">Metal-binding</keyword>
<keyword id="KW-0482">Metalloprotease</keyword>
<keyword id="KW-0645">Protease</keyword>
<keyword id="KW-0812">Transmembrane</keyword>
<keyword id="KW-1133">Transmembrane helix</keyword>
<keyword id="KW-0862">Zinc</keyword>
<organism>
    <name type="scientific">Yersinia pseudotuberculosis serotype O:3 (strain YPIII)</name>
    <dbReference type="NCBI Taxonomy" id="502800"/>
    <lineage>
        <taxon>Bacteria</taxon>
        <taxon>Pseudomonadati</taxon>
        <taxon>Pseudomonadota</taxon>
        <taxon>Gammaproteobacteria</taxon>
        <taxon>Enterobacterales</taxon>
        <taxon>Yersiniaceae</taxon>
        <taxon>Yersinia</taxon>
    </lineage>
</organism>
<reference key="1">
    <citation type="submission" date="2008-02" db="EMBL/GenBank/DDBJ databases">
        <title>Complete sequence of Yersinia pseudotuberculosis YPIII.</title>
        <authorList>
            <consortium name="US DOE Joint Genome Institute"/>
            <person name="Copeland A."/>
            <person name="Lucas S."/>
            <person name="Lapidus A."/>
            <person name="Glavina del Rio T."/>
            <person name="Dalin E."/>
            <person name="Tice H."/>
            <person name="Bruce D."/>
            <person name="Goodwin L."/>
            <person name="Pitluck S."/>
            <person name="Munk A.C."/>
            <person name="Brettin T."/>
            <person name="Detter J.C."/>
            <person name="Han C."/>
            <person name="Tapia R."/>
            <person name="Schmutz J."/>
            <person name="Larimer F."/>
            <person name="Land M."/>
            <person name="Hauser L."/>
            <person name="Challacombe J.F."/>
            <person name="Green L."/>
            <person name="Lindler L.E."/>
            <person name="Nikolich M.P."/>
            <person name="Richardson P."/>
        </authorList>
    </citation>
    <scope>NUCLEOTIDE SEQUENCE [LARGE SCALE GENOMIC DNA]</scope>
    <source>
        <strain>YPIII</strain>
    </source>
</reference>
<feature type="chain" id="PRO_1000098865" description="Protease HtpX">
    <location>
        <begin position="1"/>
        <end position="293"/>
    </location>
</feature>
<feature type="transmembrane region" description="Helical" evidence="1">
    <location>
        <begin position="4"/>
        <end position="24"/>
    </location>
</feature>
<feature type="transmembrane region" description="Helical" evidence="1">
    <location>
        <begin position="34"/>
        <end position="54"/>
    </location>
</feature>
<feature type="transmembrane region" description="Helical" evidence="1">
    <location>
        <begin position="158"/>
        <end position="178"/>
    </location>
</feature>
<feature type="transmembrane region" description="Helical" evidence="1">
    <location>
        <begin position="193"/>
        <end position="213"/>
    </location>
</feature>
<feature type="active site" evidence="1">
    <location>
        <position position="140"/>
    </location>
</feature>
<feature type="binding site" evidence="1">
    <location>
        <position position="139"/>
    </location>
    <ligand>
        <name>Zn(2+)</name>
        <dbReference type="ChEBI" id="CHEBI:29105"/>
        <note>catalytic</note>
    </ligand>
</feature>
<feature type="binding site" evidence="1">
    <location>
        <position position="143"/>
    </location>
    <ligand>
        <name>Zn(2+)</name>
        <dbReference type="ChEBI" id="CHEBI:29105"/>
        <note>catalytic</note>
    </ligand>
</feature>
<feature type="binding site" evidence="1">
    <location>
        <position position="222"/>
    </location>
    <ligand>
        <name>Zn(2+)</name>
        <dbReference type="ChEBI" id="CHEBI:29105"/>
        <note>catalytic</note>
    </ligand>
</feature>